<organism>
    <name type="scientific">Ruegeria pomeroyi (strain ATCC 700808 / DSM 15171 / DSS-3)</name>
    <name type="common">Silicibacter pomeroyi</name>
    <dbReference type="NCBI Taxonomy" id="246200"/>
    <lineage>
        <taxon>Bacteria</taxon>
        <taxon>Pseudomonadati</taxon>
        <taxon>Pseudomonadota</taxon>
        <taxon>Alphaproteobacteria</taxon>
        <taxon>Rhodobacterales</taxon>
        <taxon>Roseobacteraceae</taxon>
        <taxon>Ruegeria</taxon>
    </lineage>
</organism>
<keyword id="KW-0963">Cytoplasm</keyword>
<keyword id="KW-0255">Endonuclease</keyword>
<keyword id="KW-0378">Hydrolase</keyword>
<keyword id="KW-0460">Magnesium</keyword>
<keyword id="KW-0479">Metal-binding</keyword>
<keyword id="KW-0507">mRNA processing</keyword>
<keyword id="KW-0540">Nuclease</keyword>
<keyword id="KW-1185">Reference proteome</keyword>
<keyword id="KW-0694">RNA-binding</keyword>
<keyword id="KW-0698">rRNA processing</keyword>
<keyword id="KW-0699">rRNA-binding</keyword>
<keyword id="KW-0819">tRNA processing</keyword>
<comment type="function">
    <text evidence="1">Digests double-stranded RNA. Involved in the processing of primary rRNA transcript to yield the immediate precursors to the large and small rRNAs (23S and 16S). Processes some mRNAs, and tRNAs when they are encoded in the rRNA operon. Processes pre-crRNA and tracrRNA of type II CRISPR loci if present in the organism.</text>
</comment>
<comment type="catalytic activity">
    <reaction evidence="1">
        <text>Endonucleolytic cleavage to 5'-phosphomonoester.</text>
        <dbReference type="EC" id="3.1.26.3"/>
    </reaction>
</comment>
<comment type="cofactor">
    <cofactor evidence="1">
        <name>Mg(2+)</name>
        <dbReference type="ChEBI" id="CHEBI:18420"/>
    </cofactor>
</comment>
<comment type="subunit">
    <text evidence="1">Homodimer.</text>
</comment>
<comment type="subcellular location">
    <subcellularLocation>
        <location evidence="1">Cytoplasm</location>
    </subcellularLocation>
</comment>
<comment type="similarity">
    <text evidence="1">Belongs to the ribonuclease III family.</text>
</comment>
<protein>
    <recommendedName>
        <fullName evidence="1">Ribonuclease 3</fullName>
        <ecNumber evidence="1">3.1.26.3</ecNumber>
    </recommendedName>
    <alternativeName>
        <fullName evidence="1">Ribonuclease III</fullName>
        <shortName evidence="1">RNase III</shortName>
    </alternativeName>
</protein>
<evidence type="ECO:0000255" key="1">
    <source>
        <dbReference type="HAMAP-Rule" id="MF_00104"/>
    </source>
</evidence>
<sequence>MKLSAEMKAFEARLGYSFERPELLVRALTHGSISSSTRQDNQRLEFLGDRVLGLVMATALLEADKDATEGQLAPRFNALVRKETCAEVAREADLGAVLKLGRSEMMSGGRRKLALLGDAMEAVIAAVYRDGGFAAAEAVILRLWGARVHQVEADARDAKTALQEWAQARGQTPPRYELVKRSGPDHAPVFTILAELADGRRAEATAGAKRQAEQAAARKLLDSLD</sequence>
<proteinExistence type="inferred from homology"/>
<name>RNC_RUEPO</name>
<feature type="chain" id="PRO_0000228583" description="Ribonuclease 3">
    <location>
        <begin position="1"/>
        <end position="225"/>
    </location>
</feature>
<feature type="domain" description="RNase III" evidence="1">
    <location>
        <begin position="7"/>
        <end position="132"/>
    </location>
</feature>
<feature type="domain" description="DRBM" evidence="1">
    <location>
        <begin position="157"/>
        <end position="225"/>
    </location>
</feature>
<feature type="active site" evidence="1">
    <location>
        <position position="49"/>
    </location>
</feature>
<feature type="active site" evidence="1">
    <location>
        <position position="121"/>
    </location>
</feature>
<feature type="binding site" evidence="1">
    <location>
        <position position="45"/>
    </location>
    <ligand>
        <name>Mg(2+)</name>
        <dbReference type="ChEBI" id="CHEBI:18420"/>
    </ligand>
</feature>
<feature type="binding site" evidence="1">
    <location>
        <position position="118"/>
    </location>
    <ligand>
        <name>Mg(2+)</name>
        <dbReference type="ChEBI" id="CHEBI:18420"/>
    </ligand>
</feature>
<feature type="binding site" evidence="1">
    <location>
        <position position="121"/>
    </location>
    <ligand>
        <name>Mg(2+)</name>
        <dbReference type="ChEBI" id="CHEBI:18420"/>
    </ligand>
</feature>
<gene>
    <name evidence="1" type="primary">rnc</name>
    <name type="ordered locus">SPO3198</name>
</gene>
<reference key="1">
    <citation type="journal article" date="2004" name="Nature">
        <title>Genome sequence of Silicibacter pomeroyi reveals adaptations to the marine environment.</title>
        <authorList>
            <person name="Moran M.A."/>
            <person name="Buchan A."/>
            <person name="Gonzalez J.M."/>
            <person name="Heidelberg J.F."/>
            <person name="Whitman W.B."/>
            <person name="Kiene R.P."/>
            <person name="Henriksen J.R."/>
            <person name="King G.M."/>
            <person name="Belas R."/>
            <person name="Fuqua C."/>
            <person name="Brinkac L.M."/>
            <person name="Lewis M."/>
            <person name="Johri S."/>
            <person name="Weaver B."/>
            <person name="Pai G."/>
            <person name="Eisen J.A."/>
            <person name="Rahe E."/>
            <person name="Sheldon W.M."/>
            <person name="Ye W."/>
            <person name="Miller T.R."/>
            <person name="Carlton J."/>
            <person name="Rasko D.A."/>
            <person name="Paulsen I.T."/>
            <person name="Ren Q."/>
            <person name="Daugherty S.C."/>
            <person name="DeBoy R.T."/>
            <person name="Dodson R.J."/>
            <person name="Durkin A.S."/>
            <person name="Madupu R."/>
            <person name="Nelson W.C."/>
            <person name="Sullivan S.A."/>
            <person name="Rosovitz M.J."/>
            <person name="Haft D.H."/>
            <person name="Selengut J."/>
            <person name="Ward N."/>
        </authorList>
    </citation>
    <scope>NUCLEOTIDE SEQUENCE [LARGE SCALE GENOMIC DNA]</scope>
    <source>
        <strain>ATCC 700808 / DSM 15171 / DSS-3</strain>
    </source>
</reference>
<reference key="2">
    <citation type="journal article" date="2014" name="Stand. Genomic Sci.">
        <title>An updated genome annotation for the model marine bacterium Ruegeria pomeroyi DSS-3.</title>
        <authorList>
            <person name="Rivers A.R."/>
            <person name="Smith C.B."/>
            <person name="Moran M.A."/>
        </authorList>
    </citation>
    <scope>GENOME REANNOTATION</scope>
    <source>
        <strain>ATCC 700808 / DSM 15171 / DSS-3</strain>
    </source>
</reference>
<accession>Q5LNK5</accession>
<dbReference type="EC" id="3.1.26.3" evidence="1"/>
<dbReference type="EMBL" id="CP000031">
    <property type="protein sequence ID" value="AAV96433.1"/>
    <property type="molecule type" value="Genomic_DNA"/>
</dbReference>
<dbReference type="RefSeq" id="WP_011048888.1">
    <property type="nucleotide sequence ID" value="NC_003911.12"/>
</dbReference>
<dbReference type="SMR" id="Q5LNK5"/>
<dbReference type="STRING" id="246200.SPO3198"/>
<dbReference type="PaxDb" id="246200-SPO3198"/>
<dbReference type="KEGG" id="sil:SPO3198"/>
<dbReference type="eggNOG" id="COG0571">
    <property type="taxonomic scope" value="Bacteria"/>
</dbReference>
<dbReference type="HOGENOM" id="CLU_000907_1_1_5"/>
<dbReference type="OrthoDB" id="9805026at2"/>
<dbReference type="Proteomes" id="UP000001023">
    <property type="component" value="Chromosome"/>
</dbReference>
<dbReference type="GO" id="GO:0005737">
    <property type="term" value="C:cytoplasm"/>
    <property type="evidence" value="ECO:0007669"/>
    <property type="project" value="UniProtKB-SubCell"/>
</dbReference>
<dbReference type="GO" id="GO:0003725">
    <property type="term" value="F:double-stranded RNA binding"/>
    <property type="evidence" value="ECO:0007669"/>
    <property type="project" value="TreeGrafter"/>
</dbReference>
<dbReference type="GO" id="GO:0046872">
    <property type="term" value="F:metal ion binding"/>
    <property type="evidence" value="ECO:0007669"/>
    <property type="project" value="UniProtKB-KW"/>
</dbReference>
<dbReference type="GO" id="GO:0004525">
    <property type="term" value="F:ribonuclease III activity"/>
    <property type="evidence" value="ECO:0007669"/>
    <property type="project" value="UniProtKB-UniRule"/>
</dbReference>
<dbReference type="GO" id="GO:0019843">
    <property type="term" value="F:rRNA binding"/>
    <property type="evidence" value="ECO:0007669"/>
    <property type="project" value="UniProtKB-KW"/>
</dbReference>
<dbReference type="GO" id="GO:0006397">
    <property type="term" value="P:mRNA processing"/>
    <property type="evidence" value="ECO:0007669"/>
    <property type="project" value="UniProtKB-UniRule"/>
</dbReference>
<dbReference type="GO" id="GO:0010468">
    <property type="term" value="P:regulation of gene expression"/>
    <property type="evidence" value="ECO:0007669"/>
    <property type="project" value="TreeGrafter"/>
</dbReference>
<dbReference type="GO" id="GO:0006364">
    <property type="term" value="P:rRNA processing"/>
    <property type="evidence" value="ECO:0007669"/>
    <property type="project" value="UniProtKB-UniRule"/>
</dbReference>
<dbReference type="GO" id="GO:0008033">
    <property type="term" value="P:tRNA processing"/>
    <property type="evidence" value="ECO:0007669"/>
    <property type="project" value="UniProtKB-KW"/>
</dbReference>
<dbReference type="CDD" id="cd10845">
    <property type="entry name" value="DSRM_RNAse_III_family"/>
    <property type="match status" value="1"/>
</dbReference>
<dbReference type="CDD" id="cd00593">
    <property type="entry name" value="RIBOc"/>
    <property type="match status" value="1"/>
</dbReference>
<dbReference type="FunFam" id="1.10.1520.10:FF:000001">
    <property type="entry name" value="Ribonuclease 3"/>
    <property type="match status" value="1"/>
</dbReference>
<dbReference type="Gene3D" id="3.30.160.20">
    <property type="match status" value="1"/>
</dbReference>
<dbReference type="Gene3D" id="1.10.1520.10">
    <property type="entry name" value="Ribonuclease III domain"/>
    <property type="match status" value="1"/>
</dbReference>
<dbReference type="HAMAP" id="MF_00104">
    <property type="entry name" value="RNase_III"/>
    <property type="match status" value="1"/>
</dbReference>
<dbReference type="InterPro" id="IPR014720">
    <property type="entry name" value="dsRBD_dom"/>
</dbReference>
<dbReference type="InterPro" id="IPR011907">
    <property type="entry name" value="RNase_III"/>
</dbReference>
<dbReference type="InterPro" id="IPR000999">
    <property type="entry name" value="RNase_III_dom"/>
</dbReference>
<dbReference type="InterPro" id="IPR036389">
    <property type="entry name" value="RNase_III_sf"/>
</dbReference>
<dbReference type="NCBIfam" id="TIGR02191">
    <property type="entry name" value="RNaseIII"/>
    <property type="match status" value="1"/>
</dbReference>
<dbReference type="PANTHER" id="PTHR11207:SF0">
    <property type="entry name" value="RIBONUCLEASE 3"/>
    <property type="match status" value="1"/>
</dbReference>
<dbReference type="PANTHER" id="PTHR11207">
    <property type="entry name" value="RIBONUCLEASE III"/>
    <property type="match status" value="1"/>
</dbReference>
<dbReference type="Pfam" id="PF00035">
    <property type="entry name" value="dsrm"/>
    <property type="match status" value="1"/>
</dbReference>
<dbReference type="Pfam" id="PF14622">
    <property type="entry name" value="Ribonucleas_3_3"/>
    <property type="match status" value="1"/>
</dbReference>
<dbReference type="SMART" id="SM00358">
    <property type="entry name" value="DSRM"/>
    <property type="match status" value="1"/>
</dbReference>
<dbReference type="SMART" id="SM00535">
    <property type="entry name" value="RIBOc"/>
    <property type="match status" value="1"/>
</dbReference>
<dbReference type="SUPFAM" id="SSF54768">
    <property type="entry name" value="dsRNA-binding domain-like"/>
    <property type="match status" value="1"/>
</dbReference>
<dbReference type="SUPFAM" id="SSF69065">
    <property type="entry name" value="RNase III domain-like"/>
    <property type="match status" value="1"/>
</dbReference>
<dbReference type="PROSITE" id="PS50137">
    <property type="entry name" value="DS_RBD"/>
    <property type="match status" value="1"/>
</dbReference>
<dbReference type="PROSITE" id="PS00517">
    <property type="entry name" value="RNASE_3_1"/>
    <property type="match status" value="1"/>
</dbReference>
<dbReference type="PROSITE" id="PS50142">
    <property type="entry name" value="RNASE_3_2"/>
    <property type="match status" value="1"/>
</dbReference>